<comment type="function">
    <text evidence="1">In eubacteria ppGpp (guanosine 3'-diphosphate 5'-diphosphate) is a mediator of the stringent response that coordinates a variety of cellular activities in response to changes in nutritional abundance. This enzyme catalyzes the formation of pppGpp which is then hydrolyzed to form ppGpp (By similarity).</text>
</comment>
<comment type="catalytic activity">
    <reaction>
        <text>GTP + ATP = guanosine 3'-diphosphate 5'-triphosphate + AMP</text>
        <dbReference type="Rhea" id="RHEA:22088"/>
        <dbReference type="ChEBI" id="CHEBI:30616"/>
        <dbReference type="ChEBI" id="CHEBI:37565"/>
        <dbReference type="ChEBI" id="CHEBI:142410"/>
        <dbReference type="ChEBI" id="CHEBI:456215"/>
        <dbReference type="EC" id="2.7.6.5"/>
    </reaction>
</comment>
<comment type="pathway">
    <text>Purine metabolism; ppGpp biosynthesis; ppGpp from GTP: step 1/2.</text>
</comment>
<comment type="similarity">
    <text evidence="5">Belongs to the RelA/SpoT family.</text>
</comment>
<proteinExistence type="inferred from homology"/>
<keyword id="KW-0067">ATP-binding</keyword>
<keyword id="KW-0342">GTP-binding</keyword>
<keyword id="KW-0418">Kinase</keyword>
<keyword id="KW-0547">Nucleotide-binding</keyword>
<keyword id="KW-1185">Reference proteome</keyword>
<keyword id="KW-0808">Transferase</keyword>
<reference key="1">
    <citation type="journal article" date="1995" name="Science">
        <title>Whole-genome random sequencing and assembly of Haemophilus influenzae Rd.</title>
        <authorList>
            <person name="Fleischmann R.D."/>
            <person name="Adams M.D."/>
            <person name="White O."/>
            <person name="Clayton R.A."/>
            <person name="Kirkness E.F."/>
            <person name="Kerlavage A.R."/>
            <person name="Bult C.J."/>
            <person name="Tomb J.-F."/>
            <person name="Dougherty B.A."/>
            <person name="Merrick J.M."/>
            <person name="McKenney K."/>
            <person name="Sutton G.G."/>
            <person name="FitzHugh W."/>
            <person name="Fields C.A."/>
            <person name="Gocayne J.D."/>
            <person name="Scott J.D."/>
            <person name="Shirley R."/>
            <person name="Liu L.-I."/>
            <person name="Glodek A."/>
            <person name="Kelley J.M."/>
            <person name="Weidman J.F."/>
            <person name="Phillips C.A."/>
            <person name="Spriggs T."/>
            <person name="Hedblom E."/>
            <person name="Cotton M.D."/>
            <person name="Utterback T.R."/>
            <person name="Hanna M.C."/>
            <person name="Nguyen D.T."/>
            <person name="Saudek D.M."/>
            <person name="Brandon R.C."/>
            <person name="Fine L.D."/>
            <person name="Fritchman J.L."/>
            <person name="Fuhrmann J.L."/>
            <person name="Geoghagen N.S.M."/>
            <person name="Gnehm C.L."/>
            <person name="McDonald L.A."/>
            <person name="Small K.V."/>
            <person name="Fraser C.M."/>
            <person name="Smith H.O."/>
            <person name="Venter J.C."/>
        </authorList>
    </citation>
    <scope>NUCLEOTIDE SEQUENCE [LARGE SCALE GENOMIC DNA]</scope>
    <source>
        <strain>ATCC 51907 / DSM 11121 / KW20 / Rd</strain>
    </source>
</reference>
<organism>
    <name type="scientific">Haemophilus influenzae (strain ATCC 51907 / DSM 11121 / KW20 / Rd)</name>
    <dbReference type="NCBI Taxonomy" id="71421"/>
    <lineage>
        <taxon>Bacteria</taxon>
        <taxon>Pseudomonadati</taxon>
        <taxon>Pseudomonadota</taxon>
        <taxon>Gammaproteobacteria</taxon>
        <taxon>Pasteurellales</taxon>
        <taxon>Pasteurellaceae</taxon>
        <taxon>Haemophilus</taxon>
    </lineage>
</organism>
<sequence>MVAVRGSHLLNPQDFVIEQWCTGLKLAEQTEKSLIDAWYYARDLMNAYPDEMKNATLMLQSGVEMVEILHELNMDAETLLTAMLFPIVANKLTDWESLKEKFGAKITKLLKGVLEMDNIRQLNASHSANALQVDNVRRMLLAMVDDFRCVIIKLAERITFLRDAEHRCAEEDKVLAVKECSYIYAPLANRLGIGQLKWELEDYCFRYLHPEQYRAIAKLLQERRLDREHYIADFVSELSGYLRENIEQVEVYGRPKHIYSIWRKMQKKHLEFSGLYDVRAVRIIVQKLQDCYTALGIVHTQFKHLPKEFDDYVANPKPNGYQSIHTVVLGKGGKPIEVQIRTQQMHDDAELGMAAHWKYKEGNTGSMSAYEEKIAWLRKLLAWQDDITDSGEVLAELRSQVFDDRVYVFTPKGEVVDLPTGSTPLDFAYAIHSEIGHRCIGAKVAGRIVPFTYQLQMGDQIDIITQKNPNPSRDWLNPNLGFTHTAKSRAKIQAWFKKQDRDKNIPAGKELLDNELALLNLSIKQVEPYALPRYNLKNLDDLYAGIGSGDIRLNNLIHFLQSKLIKVTAEEADQEILRHVANKSAVNSQQKSEKNNGCVIVEGVDNLMHHIARCCQPIPGDAIVGYITMGRGISIHRADCEQFLDLQAAHPERVVESIWGENYASGFHINIRIVAGDRNGLLRDITTVLANEKISVLGVSSRADTKKQLATIDMEIELHNVESLSKILARLAKLDDVIEAKRL</sequence>
<feature type="chain" id="PRO_0000166549" description="GTP pyrophosphokinase">
    <location>
        <begin position="1"/>
        <end position="743"/>
    </location>
</feature>
<feature type="domain" description="HD" evidence="3">
    <location>
        <begin position="58"/>
        <end position="161"/>
    </location>
</feature>
<feature type="domain" description="TGS" evidence="4">
    <location>
        <begin position="404"/>
        <end position="465"/>
    </location>
</feature>
<feature type="domain" description="ACT" evidence="2">
    <location>
        <begin position="670"/>
        <end position="743"/>
    </location>
</feature>
<protein>
    <recommendedName>
        <fullName>GTP pyrophosphokinase</fullName>
        <ecNumber>2.7.6.5</ecNumber>
    </recommendedName>
    <alternativeName>
        <fullName>(p)ppGpp synthase</fullName>
    </alternativeName>
    <alternativeName>
        <fullName>ATP:GTP 3'-pyrophosphotransferase</fullName>
    </alternativeName>
    <alternativeName>
        <fullName>ppGpp synthase I</fullName>
    </alternativeName>
</protein>
<dbReference type="EC" id="2.7.6.5"/>
<dbReference type="EMBL" id="L42023">
    <property type="protein sequence ID" value="AAC21996.1"/>
    <property type="molecule type" value="Genomic_DNA"/>
</dbReference>
<dbReference type="PIR" id="D64062">
    <property type="entry name" value="D64062"/>
</dbReference>
<dbReference type="RefSeq" id="NP_438498.1">
    <property type="nucleotide sequence ID" value="NC_000907.1"/>
</dbReference>
<dbReference type="SMR" id="P44644"/>
<dbReference type="STRING" id="71421.HI_0334"/>
<dbReference type="EnsemblBacteria" id="AAC21996">
    <property type="protein sequence ID" value="AAC21996"/>
    <property type="gene ID" value="HI_0334"/>
</dbReference>
<dbReference type="KEGG" id="hin:HI_0334"/>
<dbReference type="PATRIC" id="fig|71421.8.peg.351"/>
<dbReference type="eggNOG" id="COG0317">
    <property type="taxonomic scope" value="Bacteria"/>
</dbReference>
<dbReference type="HOGENOM" id="CLU_012300_3_0_6"/>
<dbReference type="OrthoDB" id="9805041at2"/>
<dbReference type="PhylomeDB" id="P44644"/>
<dbReference type="BioCyc" id="HINF71421:G1GJ1-350-MONOMER"/>
<dbReference type="UniPathway" id="UPA00908">
    <property type="reaction ID" value="UER00884"/>
</dbReference>
<dbReference type="Proteomes" id="UP000000579">
    <property type="component" value="Chromosome"/>
</dbReference>
<dbReference type="GO" id="GO:0005524">
    <property type="term" value="F:ATP binding"/>
    <property type="evidence" value="ECO:0007669"/>
    <property type="project" value="UniProtKB-KW"/>
</dbReference>
<dbReference type="GO" id="GO:0005525">
    <property type="term" value="F:GTP binding"/>
    <property type="evidence" value="ECO:0007669"/>
    <property type="project" value="UniProtKB-KW"/>
</dbReference>
<dbReference type="GO" id="GO:0008728">
    <property type="term" value="F:GTP diphosphokinase activity"/>
    <property type="evidence" value="ECO:0000318"/>
    <property type="project" value="GO_Central"/>
</dbReference>
<dbReference type="GO" id="GO:0008893">
    <property type="term" value="F:guanosine-3',5'-bis(diphosphate) 3'-diphosphatase activity"/>
    <property type="evidence" value="ECO:0000318"/>
    <property type="project" value="GO_Central"/>
</dbReference>
<dbReference type="GO" id="GO:0016301">
    <property type="term" value="F:kinase activity"/>
    <property type="evidence" value="ECO:0007669"/>
    <property type="project" value="UniProtKB-KW"/>
</dbReference>
<dbReference type="GO" id="GO:0015970">
    <property type="term" value="P:guanosine tetraphosphate biosynthetic process"/>
    <property type="evidence" value="ECO:0007669"/>
    <property type="project" value="UniProtKB-UniPathway"/>
</dbReference>
<dbReference type="GO" id="GO:0015969">
    <property type="term" value="P:guanosine tetraphosphate metabolic process"/>
    <property type="evidence" value="ECO:0000318"/>
    <property type="project" value="GO_Central"/>
</dbReference>
<dbReference type="GO" id="GO:0042594">
    <property type="term" value="P:response to starvation"/>
    <property type="evidence" value="ECO:0000318"/>
    <property type="project" value="GO_Central"/>
</dbReference>
<dbReference type="CDD" id="cd04876">
    <property type="entry name" value="ACT_RelA-SpoT"/>
    <property type="match status" value="1"/>
</dbReference>
<dbReference type="CDD" id="cd05399">
    <property type="entry name" value="NT_Rel-Spo_like"/>
    <property type="match status" value="1"/>
</dbReference>
<dbReference type="CDD" id="cd01668">
    <property type="entry name" value="TGS_RSH"/>
    <property type="match status" value="1"/>
</dbReference>
<dbReference type="FunFam" id="1.10.3210.10:FF:000007">
    <property type="entry name" value="GTP pyrophosphokinase"/>
    <property type="match status" value="1"/>
</dbReference>
<dbReference type="FunFam" id="3.10.20.30:FF:000002">
    <property type="entry name" value="GTP pyrophosphokinase (RelA/SpoT)"/>
    <property type="match status" value="1"/>
</dbReference>
<dbReference type="FunFam" id="3.30.460.10:FF:000001">
    <property type="entry name" value="GTP pyrophosphokinase RelA"/>
    <property type="match status" value="1"/>
</dbReference>
<dbReference type="FunFam" id="3.30.70.260:FF:000010">
    <property type="entry name" value="GTP pyrophosphokinase RelA"/>
    <property type="match status" value="1"/>
</dbReference>
<dbReference type="Gene3D" id="3.10.20.30">
    <property type="match status" value="1"/>
</dbReference>
<dbReference type="Gene3D" id="3.30.70.260">
    <property type="match status" value="1"/>
</dbReference>
<dbReference type="Gene3D" id="3.30.460.10">
    <property type="entry name" value="Beta Polymerase, domain 2"/>
    <property type="match status" value="1"/>
</dbReference>
<dbReference type="Gene3D" id="1.10.3210.10">
    <property type="entry name" value="Hypothetical protein af1432"/>
    <property type="match status" value="1"/>
</dbReference>
<dbReference type="InterPro" id="IPR045865">
    <property type="entry name" value="ACT-like_dom_sf"/>
</dbReference>
<dbReference type="InterPro" id="IPR002912">
    <property type="entry name" value="ACT_dom"/>
</dbReference>
<dbReference type="InterPro" id="IPR012675">
    <property type="entry name" value="Beta-grasp_dom_sf"/>
</dbReference>
<dbReference type="InterPro" id="IPR006674">
    <property type="entry name" value="HD_domain"/>
</dbReference>
<dbReference type="InterPro" id="IPR043519">
    <property type="entry name" value="NT_sf"/>
</dbReference>
<dbReference type="InterPro" id="IPR004811">
    <property type="entry name" value="RelA/Spo_fam"/>
</dbReference>
<dbReference type="InterPro" id="IPR045600">
    <property type="entry name" value="RelA/SpoT_AH_RIS"/>
</dbReference>
<dbReference type="InterPro" id="IPR007685">
    <property type="entry name" value="RelA_SpoT"/>
</dbReference>
<dbReference type="InterPro" id="IPR004095">
    <property type="entry name" value="TGS"/>
</dbReference>
<dbReference type="InterPro" id="IPR012676">
    <property type="entry name" value="TGS-like"/>
</dbReference>
<dbReference type="InterPro" id="IPR033655">
    <property type="entry name" value="TGS_RelA/SpoT"/>
</dbReference>
<dbReference type="NCBIfam" id="NF008124">
    <property type="entry name" value="PRK10872.1"/>
    <property type="match status" value="1"/>
</dbReference>
<dbReference type="NCBIfam" id="TIGR00691">
    <property type="entry name" value="spoT_relA"/>
    <property type="match status" value="1"/>
</dbReference>
<dbReference type="PANTHER" id="PTHR21262:SF31">
    <property type="entry name" value="GTP PYROPHOSPHOKINASE"/>
    <property type="match status" value="1"/>
</dbReference>
<dbReference type="PANTHER" id="PTHR21262">
    <property type="entry name" value="GUANOSINE-3',5'-BIS DIPHOSPHATE 3'-PYROPHOSPHOHYDROLASE"/>
    <property type="match status" value="1"/>
</dbReference>
<dbReference type="Pfam" id="PF13291">
    <property type="entry name" value="ACT_4"/>
    <property type="match status" value="1"/>
</dbReference>
<dbReference type="Pfam" id="PF13328">
    <property type="entry name" value="HD_4"/>
    <property type="match status" value="1"/>
</dbReference>
<dbReference type="Pfam" id="PF19296">
    <property type="entry name" value="RelA_AH_RIS"/>
    <property type="match status" value="1"/>
</dbReference>
<dbReference type="Pfam" id="PF04607">
    <property type="entry name" value="RelA_SpoT"/>
    <property type="match status" value="1"/>
</dbReference>
<dbReference type="Pfam" id="PF02824">
    <property type="entry name" value="TGS"/>
    <property type="match status" value="1"/>
</dbReference>
<dbReference type="SMART" id="SM00954">
    <property type="entry name" value="RelA_SpoT"/>
    <property type="match status" value="1"/>
</dbReference>
<dbReference type="SUPFAM" id="SSF55021">
    <property type="entry name" value="ACT-like"/>
    <property type="match status" value="1"/>
</dbReference>
<dbReference type="SUPFAM" id="SSF109604">
    <property type="entry name" value="HD-domain/PDEase-like"/>
    <property type="match status" value="1"/>
</dbReference>
<dbReference type="SUPFAM" id="SSF81301">
    <property type="entry name" value="Nucleotidyltransferase"/>
    <property type="match status" value="1"/>
</dbReference>
<dbReference type="SUPFAM" id="SSF81271">
    <property type="entry name" value="TGS-like"/>
    <property type="match status" value="1"/>
</dbReference>
<dbReference type="PROSITE" id="PS51671">
    <property type="entry name" value="ACT"/>
    <property type="match status" value="1"/>
</dbReference>
<dbReference type="PROSITE" id="PS51831">
    <property type="entry name" value="HD"/>
    <property type="match status" value="1"/>
</dbReference>
<dbReference type="PROSITE" id="PS51880">
    <property type="entry name" value="TGS"/>
    <property type="match status" value="1"/>
</dbReference>
<evidence type="ECO:0000250" key="1"/>
<evidence type="ECO:0000255" key="2">
    <source>
        <dbReference type="PROSITE-ProRule" id="PRU01007"/>
    </source>
</evidence>
<evidence type="ECO:0000255" key="3">
    <source>
        <dbReference type="PROSITE-ProRule" id="PRU01175"/>
    </source>
</evidence>
<evidence type="ECO:0000255" key="4">
    <source>
        <dbReference type="PROSITE-ProRule" id="PRU01228"/>
    </source>
</evidence>
<evidence type="ECO:0000305" key="5"/>
<name>RELA_HAEIN</name>
<gene>
    <name type="primary">relA</name>
    <name type="ordered locus">HI_0334</name>
</gene>
<accession>P44644</accession>